<proteinExistence type="inferred from homology"/>
<evidence type="ECO:0000255" key="1">
    <source>
        <dbReference type="HAMAP-Rule" id="MF_00152"/>
    </source>
</evidence>
<organism>
    <name type="scientific">Metamycoplasma arthritidis (strain 158L3-1)</name>
    <name type="common">Mycoplasma arthritidis</name>
    <dbReference type="NCBI Taxonomy" id="243272"/>
    <lineage>
        <taxon>Bacteria</taxon>
        <taxon>Bacillati</taxon>
        <taxon>Mycoplasmatota</taxon>
        <taxon>Mycoplasmoidales</taxon>
        <taxon>Metamycoplasmataceae</taxon>
        <taxon>Metamycoplasma</taxon>
    </lineage>
</organism>
<name>END4_META1</name>
<accession>B3PMH1</accession>
<gene>
    <name evidence="1" type="primary">nfo</name>
    <name type="ordered locus">MARTH_orf342</name>
</gene>
<sequence>MIKLGSHVSFKAPDYLCGAIKESLDNGANCAMIYLGPPQNSTRISVEKYHYEDYLAKYSSQIKAEDIVVHAPYIVNLANRSKQEFAIDFLVAECQRANYIGIKYLVLHPGFHNNLYPVKEALDILVFGLKKILEQTKDITICLETMAGKGSEICSNFEDIKYVIDQVNNDRVAMCLDTCHIWDAGYNIKDYDAFKKYLIDNDYLKLIKVIHLNDSLNDRASHKDRHANIDKGYIKLETLKRFVHDKDFDNIPIILETPRTKDWSPYKDEIKTLLAK</sequence>
<protein>
    <recommendedName>
        <fullName evidence="1">Probable endonuclease 4</fullName>
        <ecNumber evidence="1">3.1.21.2</ecNumber>
    </recommendedName>
    <alternativeName>
        <fullName evidence="1">Endodeoxyribonuclease IV</fullName>
    </alternativeName>
    <alternativeName>
        <fullName evidence="1">Endonuclease IV</fullName>
    </alternativeName>
</protein>
<feature type="chain" id="PRO_1000096890" description="Probable endonuclease 4">
    <location>
        <begin position="1"/>
        <end position="276"/>
    </location>
</feature>
<feature type="binding site" evidence="1">
    <location>
        <position position="70"/>
    </location>
    <ligand>
        <name>Zn(2+)</name>
        <dbReference type="ChEBI" id="CHEBI:29105"/>
        <label>1</label>
    </ligand>
</feature>
<feature type="binding site" evidence="1">
    <location>
        <position position="108"/>
    </location>
    <ligand>
        <name>Zn(2+)</name>
        <dbReference type="ChEBI" id="CHEBI:29105"/>
        <label>1</label>
    </ligand>
</feature>
<feature type="binding site" evidence="1">
    <location>
        <position position="144"/>
    </location>
    <ligand>
        <name>Zn(2+)</name>
        <dbReference type="ChEBI" id="CHEBI:29105"/>
        <label>1</label>
    </ligand>
</feature>
<feature type="binding site" evidence="1">
    <location>
        <position position="144"/>
    </location>
    <ligand>
        <name>Zn(2+)</name>
        <dbReference type="ChEBI" id="CHEBI:29105"/>
        <label>2</label>
    </ligand>
</feature>
<feature type="binding site" evidence="1">
    <location>
        <position position="177"/>
    </location>
    <ligand>
        <name>Zn(2+)</name>
        <dbReference type="ChEBI" id="CHEBI:29105"/>
        <label>2</label>
    </ligand>
</feature>
<feature type="binding site" evidence="1">
    <location>
        <position position="180"/>
    </location>
    <ligand>
        <name>Zn(2+)</name>
        <dbReference type="ChEBI" id="CHEBI:29105"/>
        <label>3</label>
    </ligand>
</feature>
<feature type="binding site" evidence="1">
    <location>
        <position position="211"/>
    </location>
    <ligand>
        <name>Zn(2+)</name>
        <dbReference type="ChEBI" id="CHEBI:29105"/>
        <label>2</label>
    </ligand>
</feature>
<feature type="binding site" evidence="1">
    <location>
        <position position="224"/>
    </location>
    <ligand>
        <name>Zn(2+)</name>
        <dbReference type="ChEBI" id="CHEBI:29105"/>
        <label>3</label>
    </ligand>
</feature>
<feature type="binding site" evidence="1">
    <location>
        <position position="226"/>
    </location>
    <ligand>
        <name>Zn(2+)</name>
        <dbReference type="ChEBI" id="CHEBI:29105"/>
        <label>3</label>
    </ligand>
</feature>
<feature type="binding site" evidence="1">
    <location>
        <position position="256"/>
    </location>
    <ligand>
        <name>Zn(2+)</name>
        <dbReference type="ChEBI" id="CHEBI:29105"/>
        <label>2</label>
    </ligand>
</feature>
<comment type="function">
    <text evidence="1">Endonuclease IV plays a role in DNA repair. It cleaves phosphodiester bonds at apurinic or apyrimidinic (AP) sites, generating a 3'-hydroxyl group and a 5'-terminal sugar phosphate.</text>
</comment>
<comment type="catalytic activity">
    <reaction evidence="1">
        <text>Endonucleolytic cleavage to 5'-phosphooligonucleotide end-products.</text>
        <dbReference type="EC" id="3.1.21.2"/>
    </reaction>
</comment>
<comment type="cofactor">
    <cofactor evidence="1">
        <name>Zn(2+)</name>
        <dbReference type="ChEBI" id="CHEBI:29105"/>
    </cofactor>
    <text evidence="1">Binds 3 Zn(2+) ions.</text>
</comment>
<comment type="similarity">
    <text evidence="1">Belongs to the AP endonuclease 2 family.</text>
</comment>
<keyword id="KW-0227">DNA damage</keyword>
<keyword id="KW-0234">DNA repair</keyword>
<keyword id="KW-0255">Endonuclease</keyword>
<keyword id="KW-0378">Hydrolase</keyword>
<keyword id="KW-0479">Metal-binding</keyword>
<keyword id="KW-0540">Nuclease</keyword>
<keyword id="KW-1185">Reference proteome</keyword>
<keyword id="KW-0862">Zinc</keyword>
<reference key="1">
    <citation type="journal article" date="2008" name="Infect. Immun.">
        <title>Genome of Mycoplasma arthritidis.</title>
        <authorList>
            <person name="Dybvig K."/>
            <person name="Zuhua C."/>
            <person name="Lao P."/>
            <person name="Jordan D.S."/>
            <person name="French C.T."/>
            <person name="Tu A.H."/>
            <person name="Loraine A.E."/>
        </authorList>
    </citation>
    <scope>NUCLEOTIDE SEQUENCE [LARGE SCALE GENOMIC DNA]</scope>
    <source>
        <strain>158L3-1</strain>
    </source>
</reference>
<dbReference type="EC" id="3.1.21.2" evidence="1"/>
<dbReference type="EMBL" id="CP001047">
    <property type="protein sequence ID" value="ACF07223.1"/>
    <property type="molecule type" value="Genomic_DNA"/>
</dbReference>
<dbReference type="RefSeq" id="WP_012498180.1">
    <property type="nucleotide sequence ID" value="NC_011025.1"/>
</dbReference>
<dbReference type="SMR" id="B3PMH1"/>
<dbReference type="STRING" id="243272.MARTH_orf342"/>
<dbReference type="KEGG" id="mat:MARTH_orf342"/>
<dbReference type="eggNOG" id="COG0648">
    <property type="taxonomic scope" value="Bacteria"/>
</dbReference>
<dbReference type="HOGENOM" id="CLU_025885_0_4_14"/>
<dbReference type="Proteomes" id="UP000008812">
    <property type="component" value="Chromosome"/>
</dbReference>
<dbReference type="GO" id="GO:0008833">
    <property type="term" value="F:deoxyribonuclease IV (phage-T4-induced) activity"/>
    <property type="evidence" value="ECO:0007669"/>
    <property type="project" value="UniProtKB-UniRule"/>
</dbReference>
<dbReference type="GO" id="GO:0003677">
    <property type="term" value="F:DNA binding"/>
    <property type="evidence" value="ECO:0007669"/>
    <property type="project" value="InterPro"/>
</dbReference>
<dbReference type="GO" id="GO:0003906">
    <property type="term" value="F:DNA-(apurinic or apyrimidinic site) endonuclease activity"/>
    <property type="evidence" value="ECO:0007669"/>
    <property type="project" value="TreeGrafter"/>
</dbReference>
<dbReference type="GO" id="GO:0008081">
    <property type="term" value="F:phosphoric diester hydrolase activity"/>
    <property type="evidence" value="ECO:0007669"/>
    <property type="project" value="TreeGrafter"/>
</dbReference>
<dbReference type="GO" id="GO:0008270">
    <property type="term" value="F:zinc ion binding"/>
    <property type="evidence" value="ECO:0007669"/>
    <property type="project" value="UniProtKB-UniRule"/>
</dbReference>
<dbReference type="GO" id="GO:0006284">
    <property type="term" value="P:base-excision repair"/>
    <property type="evidence" value="ECO:0007669"/>
    <property type="project" value="TreeGrafter"/>
</dbReference>
<dbReference type="CDD" id="cd00019">
    <property type="entry name" value="AP2Ec"/>
    <property type="match status" value="1"/>
</dbReference>
<dbReference type="FunFam" id="3.20.20.150:FF:000001">
    <property type="entry name" value="Probable endonuclease 4"/>
    <property type="match status" value="1"/>
</dbReference>
<dbReference type="Gene3D" id="3.20.20.150">
    <property type="entry name" value="Divalent-metal-dependent TIM barrel enzymes"/>
    <property type="match status" value="1"/>
</dbReference>
<dbReference type="HAMAP" id="MF_00152">
    <property type="entry name" value="Nfo"/>
    <property type="match status" value="1"/>
</dbReference>
<dbReference type="InterPro" id="IPR001719">
    <property type="entry name" value="AP_endonuc_2"/>
</dbReference>
<dbReference type="InterPro" id="IPR018246">
    <property type="entry name" value="AP_endonuc_F2_Zn_BS"/>
</dbReference>
<dbReference type="InterPro" id="IPR036237">
    <property type="entry name" value="Xyl_isomerase-like_sf"/>
</dbReference>
<dbReference type="InterPro" id="IPR013022">
    <property type="entry name" value="Xyl_isomerase-like_TIM-brl"/>
</dbReference>
<dbReference type="NCBIfam" id="TIGR00587">
    <property type="entry name" value="nfo"/>
    <property type="match status" value="1"/>
</dbReference>
<dbReference type="NCBIfam" id="NF002196">
    <property type="entry name" value="PRK01060.1-1"/>
    <property type="match status" value="1"/>
</dbReference>
<dbReference type="PANTHER" id="PTHR21445:SF0">
    <property type="entry name" value="APURINIC-APYRIMIDINIC ENDONUCLEASE"/>
    <property type="match status" value="1"/>
</dbReference>
<dbReference type="PANTHER" id="PTHR21445">
    <property type="entry name" value="ENDONUCLEASE IV ENDODEOXYRIBONUCLEASE IV"/>
    <property type="match status" value="1"/>
</dbReference>
<dbReference type="Pfam" id="PF01261">
    <property type="entry name" value="AP_endonuc_2"/>
    <property type="match status" value="1"/>
</dbReference>
<dbReference type="SMART" id="SM00518">
    <property type="entry name" value="AP2Ec"/>
    <property type="match status" value="1"/>
</dbReference>
<dbReference type="SUPFAM" id="SSF51658">
    <property type="entry name" value="Xylose isomerase-like"/>
    <property type="match status" value="1"/>
</dbReference>
<dbReference type="PROSITE" id="PS00730">
    <property type="entry name" value="AP_NUCLEASE_F2_2"/>
    <property type="match status" value="1"/>
</dbReference>
<dbReference type="PROSITE" id="PS00731">
    <property type="entry name" value="AP_NUCLEASE_F2_3"/>
    <property type="match status" value="1"/>
</dbReference>
<dbReference type="PROSITE" id="PS51432">
    <property type="entry name" value="AP_NUCLEASE_F2_4"/>
    <property type="match status" value="1"/>
</dbReference>